<proteinExistence type="evidence at transcript level"/>
<protein>
    <recommendedName>
        <fullName>Cytotoxin 2a</fullName>
    </recommendedName>
    <alternativeName>
        <fullName>Cardiotoxin 2a</fullName>
        <shortName>CTX-2a</shortName>
        <shortName>Ctx2a</shortName>
    </alternativeName>
</protein>
<accession>Q9PST4</accession>
<accession>O73855</accession>
<accession>Q90WJ1</accession>
<organism>
    <name type="scientific">Naja sputatrix</name>
    <name type="common">Malayan spitting cobra</name>
    <name type="synonym">Naja naja sputatrix</name>
    <dbReference type="NCBI Taxonomy" id="33626"/>
    <lineage>
        <taxon>Eukaryota</taxon>
        <taxon>Metazoa</taxon>
        <taxon>Chordata</taxon>
        <taxon>Craniata</taxon>
        <taxon>Vertebrata</taxon>
        <taxon>Euteleostomi</taxon>
        <taxon>Lepidosauria</taxon>
        <taxon>Squamata</taxon>
        <taxon>Bifurcata</taxon>
        <taxon>Unidentata</taxon>
        <taxon>Episquamata</taxon>
        <taxon>Toxicofera</taxon>
        <taxon>Serpentes</taxon>
        <taxon>Colubroidea</taxon>
        <taxon>Elapidae</taxon>
        <taxon>Elapinae</taxon>
        <taxon>Naja</taxon>
    </lineage>
</organism>
<feature type="signal peptide" evidence="4">
    <location>
        <begin position="1"/>
        <end position="21"/>
    </location>
</feature>
<feature type="chain" id="PRO_0000035394" description="Cytotoxin 2a">
    <location>
        <begin position="22"/>
        <end position="81"/>
    </location>
</feature>
<feature type="disulfide bond" evidence="2">
    <location>
        <begin position="24"/>
        <end position="42"/>
    </location>
</feature>
<feature type="disulfide bond" evidence="2">
    <location>
        <begin position="35"/>
        <end position="59"/>
    </location>
</feature>
<feature type="disulfide bond" evidence="2">
    <location>
        <begin position="63"/>
        <end position="74"/>
    </location>
</feature>
<feature type="disulfide bond" evidence="2">
    <location>
        <begin position="75"/>
        <end position="80"/>
    </location>
</feature>
<comment type="function">
    <text evidence="2 3">Shows cytolytic activity on many different cells by forming pore in lipid membranes. In vivo, increases heart rate or kills the animal by cardiac arrest. In addition, it binds to heparin with high affinity, interacts with Kv channel-interacting protein 1 (KCNIP1) in a calcium-independent manner, and binds to integrin alpha-V/beta-3 (ITGAV/ITGB3) with moderate affinity.</text>
</comment>
<comment type="subunit">
    <text evidence="2">Monomer in solution; Homodimer and oligomer in the presence of negatively charged lipids forming a pore with a size ranging between 20 and 30 Angstroms.</text>
</comment>
<comment type="subcellular location">
    <subcellularLocation>
        <location evidence="1">Secreted</location>
    </subcellularLocation>
    <subcellularLocation>
        <location evidence="2">Target cell membrane</location>
    </subcellularLocation>
</comment>
<comment type="tissue specificity">
    <text evidence="5">Expressed by the venom gland. Non-spliced mRNAs of CTX-2A are found in liver, heart, and muscle, but these transcripts give truncated proteins.</text>
</comment>
<comment type="miscellaneous">
    <text evidence="6">Is classified as a P-type cytotoxin, since a proline residue stands at position 51 (Pro-31 in standard classification).</text>
</comment>
<comment type="similarity">
    <text evidence="6">Belongs to the three-finger toxin family. Short-chain subfamily. Type IA cytotoxin sub-subfamily.</text>
</comment>
<sequence>MKTLLLTLVVVTIVCLDLGYTLKCNKLVPLFYKTCPAGKNLCYKMYMVATPKVPVKRGCIDVCPKSSLLVKYVCCNTDRCN</sequence>
<reference key="1">
    <citation type="journal article" date="1998" name="Biochim. Biophys. Acta">
        <title>Six isoforms of cardiotoxin in malayan spitting cobra (Naja naja sputatrix) venom: cloning and characterization of cDNAs.</title>
        <authorList>
            <person name="Jeyaseelan K."/>
            <person name="Armugam A."/>
            <person name="Lachumanan R."/>
            <person name="Tan C.H."/>
            <person name="Tan N.H."/>
        </authorList>
    </citation>
    <scope>NUCLEOTIDE SEQUENCE [MRNA]</scope>
    <source>
        <tissue>Venom gland</tissue>
    </source>
</reference>
<reference key="2">
    <citation type="journal article" date="2001" name="Eur. J. Biochem.">
        <title>Expression of cardiotoxin-2 gene. Cloning, characterization and deletion analysis of the promoter.</title>
        <authorList>
            <person name="Ma D."/>
            <person name="Armugam A."/>
            <person name="Jeyaseelan K."/>
        </authorList>
    </citation>
    <scope>NUCLEOTIDE SEQUENCE [GENOMIC DNA] OF 1-19</scope>
    <scope>TISSUE SPECIFICITY</scope>
    <source>
        <tissue>Liver</tissue>
    </source>
</reference>
<reference key="3">
    <citation type="journal article" date="1998" name="FEBS Lett.">
        <title>Structure and organization of the cardiotoxin genes in Naja naja sputatrix.</title>
        <authorList>
            <person name="Lachumanan R."/>
            <person name="Armugam A."/>
            <person name="Tan C.H."/>
            <person name="Jeyaseelan K."/>
        </authorList>
    </citation>
    <scope>NUCLEOTIDE SEQUENCE [GENOMIC DNA] OF 20-81</scope>
    <source>
        <tissue>Liver</tissue>
    </source>
</reference>
<name>3SA2A_NAJSP</name>
<evidence type="ECO:0000250" key="1"/>
<evidence type="ECO:0000250" key="2">
    <source>
        <dbReference type="UniProtKB" id="P60301"/>
    </source>
</evidence>
<evidence type="ECO:0000250" key="3">
    <source>
        <dbReference type="UniProtKB" id="P60304"/>
    </source>
</evidence>
<evidence type="ECO:0000255" key="4"/>
<evidence type="ECO:0000269" key="5">
    <source>
    </source>
</evidence>
<evidence type="ECO:0000305" key="6"/>
<keyword id="KW-0123">Cardiotoxin</keyword>
<keyword id="KW-0204">Cytolysis</keyword>
<keyword id="KW-1015">Disulfide bond</keyword>
<keyword id="KW-0472">Membrane</keyword>
<keyword id="KW-0964">Secreted</keyword>
<keyword id="KW-0732">Signal</keyword>
<keyword id="KW-1052">Target cell membrane</keyword>
<keyword id="KW-1053">Target membrane</keyword>
<keyword id="KW-0800">Toxin</keyword>
<dbReference type="EMBL" id="U86589">
    <property type="protein sequence ID" value="AAC27685.1"/>
    <property type="molecule type" value="mRNA"/>
</dbReference>
<dbReference type="EMBL" id="AF276222">
    <property type="protein sequence ID" value="AAK49439.1"/>
    <property type="molecule type" value="mRNA"/>
</dbReference>
<dbReference type="EMBL" id="AF276223">
    <property type="protein sequence ID" value="AAK49440.1"/>
    <property type="status" value="ALT_TERM"/>
    <property type="molecule type" value="mRNA"/>
</dbReference>
<dbReference type="EMBL" id="AF064097">
    <property type="protein sequence ID" value="AAC61315.1"/>
    <property type="molecule type" value="Genomic_DNA"/>
</dbReference>
<dbReference type="SMR" id="Q9PST4"/>
<dbReference type="GO" id="GO:0005576">
    <property type="term" value="C:extracellular region"/>
    <property type="evidence" value="ECO:0007669"/>
    <property type="project" value="UniProtKB-SubCell"/>
</dbReference>
<dbReference type="GO" id="GO:0016020">
    <property type="term" value="C:membrane"/>
    <property type="evidence" value="ECO:0007669"/>
    <property type="project" value="UniProtKB-KW"/>
</dbReference>
<dbReference type="GO" id="GO:0044218">
    <property type="term" value="C:other organism cell membrane"/>
    <property type="evidence" value="ECO:0007669"/>
    <property type="project" value="UniProtKB-KW"/>
</dbReference>
<dbReference type="GO" id="GO:0090729">
    <property type="term" value="F:toxin activity"/>
    <property type="evidence" value="ECO:0007669"/>
    <property type="project" value="UniProtKB-KW"/>
</dbReference>
<dbReference type="GO" id="GO:0031640">
    <property type="term" value="P:killing of cells of another organism"/>
    <property type="evidence" value="ECO:0007669"/>
    <property type="project" value="UniProtKB-KW"/>
</dbReference>
<dbReference type="CDD" id="cd00206">
    <property type="entry name" value="TFP_snake_toxin"/>
    <property type="match status" value="1"/>
</dbReference>
<dbReference type="FunFam" id="2.10.60.10:FF:000024">
    <property type="entry name" value="Cytotoxin 1"/>
    <property type="match status" value="1"/>
</dbReference>
<dbReference type="Gene3D" id="2.10.60.10">
    <property type="entry name" value="CD59"/>
    <property type="match status" value="1"/>
</dbReference>
<dbReference type="InterPro" id="IPR003572">
    <property type="entry name" value="Cytotoxin_Cobra"/>
</dbReference>
<dbReference type="InterPro" id="IPR003571">
    <property type="entry name" value="Snake_3FTx"/>
</dbReference>
<dbReference type="InterPro" id="IPR045860">
    <property type="entry name" value="Snake_toxin-like_sf"/>
</dbReference>
<dbReference type="InterPro" id="IPR018354">
    <property type="entry name" value="Snake_toxin_con_site"/>
</dbReference>
<dbReference type="InterPro" id="IPR054131">
    <property type="entry name" value="Toxin_cobra-type"/>
</dbReference>
<dbReference type="Pfam" id="PF21947">
    <property type="entry name" value="Toxin_cobra-type"/>
    <property type="match status" value="1"/>
</dbReference>
<dbReference type="PRINTS" id="PR00282">
    <property type="entry name" value="CYTOTOXIN"/>
</dbReference>
<dbReference type="SUPFAM" id="SSF57302">
    <property type="entry name" value="Snake toxin-like"/>
    <property type="match status" value="1"/>
</dbReference>
<dbReference type="PROSITE" id="PS00272">
    <property type="entry name" value="SNAKE_TOXIN"/>
    <property type="match status" value="1"/>
</dbReference>